<name>UBXN8_MOUSE</name>
<proteinExistence type="evidence at protein level"/>
<organism>
    <name type="scientific">Mus musculus</name>
    <name type="common">Mouse</name>
    <dbReference type="NCBI Taxonomy" id="10090"/>
    <lineage>
        <taxon>Eukaryota</taxon>
        <taxon>Metazoa</taxon>
        <taxon>Chordata</taxon>
        <taxon>Craniata</taxon>
        <taxon>Vertebrata</taxon>
        <taxon>Euteleostomi</taxon>
        <taxon>Mammalia</taxon>
        <taxon>Eutheria</taxon>
        <taxon>Euarchontoglires</taxon>
        <taxon>Glires</taxon>
        <taxon>Rodentia</taxon>
        <taxon>Myomorpha</taxon>
        <taxon>Muroidea</taxon>
        <taxon>Muridae</taxon>
        <taxon>Murinae</taxon>
        <taxon>Mus</taxon>
        <taxon>Mus</taxon>
    </lineage>
</organism>
<reference key="1">
    <citation type="journal article" date="1999" name="Gene">
        <title>Structures of mouse Rep-8 cDNA and genomic clones.</title>
        <authorList>
            <person name="Yamabe Y."/>
            <person name="Yokoi A."/>
            <person name="Imamura O."/>
            <person name="Matsui M."/>
            <person name="Matsunaga A."/>
            <person name="Taketo M."/>
            <person name="Sugawara M."/>
            <person name="Furuichi Y."/>
        </authorList>
    </citation>
    <scope>NUCLEOTIDE SEQUENCE [MRNA]</scope>
    <scope>DEVELOPMENTAL STAGE</scope>
    <source>
        <tissue>Testis</tissue>
    </source>
</reference>
<reference key="2">
    <citation type="journal article" date="2004" name="Genome Res.">
        <title>The status, quality, and expansion of the NIH full-length cDNA project: the Mammalian Gene Collection (MGC).</title>
        <authorList>
            <consortium name="The MGC Project Team"/>
        </authorList>
    </citation>
    <scope>NUCLEOTIDE SEQUENCE [LARGE SCALE MRNA]</scope>
    <source>
        <strain>FVB/N</strain>
        <tissue>Colon</tissue>
    </source>
</reference>
<reference key="3">
    <citation type="journal article" date="2011" name="PLoS ONE">
        <title>The tissue-specific Rep8/UBXD6 tethers p97 to the endoplasmic reticulum membrane for degradation of misfolded proteins.</title>
        <authorList>
            <person name="Madsen L."/>
            <person name="Kriegenburg F."/>
            <person name="Vala A."/>
            <person name="Best D."/>
            <person name="Prag S."/>
            <person name="Hofmann K."/>
            <person name="Seeger M."/>
            <person name="Adams I.R."/>
            <person name="Hartmann-Petersen R."/>
        </authorList>
    </citation>
    <scope>TISSUE SPECIFICITY</scope>
</reference>
<reference key="4">
    <citation type="submission" date="2005-11" db="PDB data bank">
        <title>Solution structure of the UBX domain of D0H8S2298E protein.</title>
        <authorList>
            <consortium name="RIKEN structural genomics initiative (RSGI)"/>
        </authorList>
    </citation>
    <scope>STRUCTURE BY NMR OF 182-277</scope>
</reference>
<accession>Q9QZ49</accession>
<comment type="function">
    <text evidence="1">Involved in endoplasmic reticulum-associated degradation (ERAD) for misfolded lumenal proteins, possibly by tethering VCP to the endoplasmic reticulum membrane. May play a role in reproduction (By similarity).</text>
</comment>
<comment type="subunit">
    <text evidence="1">Interacts with SYVN1 and VCP.</text>
</comment>
<comment type="subcellular location">
    <subcellularLocation>
        <location evidence="1">Endoplasmic reticulum membrane</location>
        <topology evidence="1">Multi-pass membrane protein</topology>
    </subcellularLocation>
</comment>
<comment type="tissue specificity">
    <text evidence="5">Highly expressed in gonads. In testis, expressed in post-meiotic round spermatids, while in ovaries it is expressed in granulosa cells.</text>
</comment>
<comment type="developmental stage">
    <text evidence="6">Expressed in both the early and late embryonic stages of development.</text>
</comment>
<keyword id="KW-0002">3D-structure</keyword>
<keyword id="KW-0256">Endoplasmic reticulum</keyword>
<keyword id="KW-0472">Membrane</keyword>
<keyword id="KW-1185">Reference proteome</keyword>
<keyword id="KW-0812">Transmembrane</keyword>
<keyword id="KW-1133">Transmembrane helix</keyword>
<feature type="chain" id="PRO_0000211034" description="UBX domain-containing protein 8">
    <location>
        <begin position="1"/>
        <end position="277"/>
    </location>
</feature>
<feature type="topological domain" description="Cytoplasmic" evidence="2">
    <location>
        <position position="1"/>
    </location>
</feature>
<feature type="transmembrane region" description="Helical" evidence="2">
    <location>
        <begin position="2"/>
        <end position="22"/>
    </location>
</feature>
<feature type="topological domain" description="Lumenal" evidence="2">
    <location>
        <begin position="23"/>
        <end position="33"/>
    </location>
</feature>
<feature type="transmembrane region" description="Helical" evidence="2">
    <location>
        <begin position="34"/>
        <end position="54"/>
    </location>
</feature>
<feature type="topological domain" description="Cytoplasmic" evidence="2">
    <location>
        <begin position="55"/>
        <end position="277"/>
    </location>
</feature>
<feature type="domain" description="UBX" evidence="3">
    <location>
        <begin position="193"/>
        <end position="269"/>
    </location>
</feature>
<feature type="region of interest" description="Disordered" evidence="4">
    <location>
        <begin position="64"/>
        <end position="89"/>
    </location>
</feature>
<feature type="compositionally biased region" description="Basic and acidic residues" evidence="4">
    <location>
        <begin position="68"/>
        <end position="89"/>
    </location>
</feature>
<feature type="strand" evidence="7">
    <location>
        <begin position="195"/>
        <end position="203"/>
    </location>
</feature>
<feature type="strand" evidence="7">
    <location>
        <begin position="209"/>
        <end position="219"/>
    </location>
</feature>
<feature type="helix" evidence="7">
    <location>
        <begin position="221"/>
        <end position="230"/>
    </location>
</feature>
<feature type="turn" evidence="7">
    <location>
        <begin position="234"/>
        <end position="236"/>
    </location>
</feature>
<feature type="strand" evidence="7">
    <location>
        <begin position="237"/>
        <end position="240"/>
    </location>
</feature>
<feature type="strand" evidence="7">
    <location>
        <begin position="242"/>
        <end position="244"/>
    </location>
</feature>
<feature type="helix" evidence="7">
    <location>
        <begin position="256"/>
        <end position="259"/>
    </location>
</feature>
<feature type="strand" evidence="7">
    <location>
        <begin position="265"/>
        <end position="271"/>
    </location>
</feature>
<gene>
    <name type="primary">Ubxn8</name>
    <name type="synonym">D0H8S2298E</name>
    <name type="synonym">Rep8</name>
    <name type="synonym">Ubxd6</name>
</gene>
<evidence type="ECO:0000250" key="1"/>
<evidence type="ECO:0000255" key="2"/>
<evidence type="ECO:0000255" key="3">
    <source>
        <dbReference type="PROSITE-ProRule" id="PRU00215"/>
    </source>
</evidence>
<evidence type="ECO:0000256" key="4">
    <source>
        <dbReference type="SAM" id="MobiDB-lite"/>
    </source>
</evidence>
<evidence type="ECO:0000269" key="5">
    <source>
    </source>
</evidence>
<evidence type="ECO:0000269" key="6">
    <source>
    </source>
</evidence>
<evidence type="ECO:0007829" key="7">
    <source>
        <dbReference type="PDB" id="2CR5"/>
    </source>
</evidence>
<sequence length="277" mass="31555">MASRGVVGLFLLSALPLLCLELRRGIPSLGIKDLILLSGRIFLLLALLTLVISVTTSWFNSLKPSQGHLKEGEKENEKRRRLVRERQQEAQGEKASRYIENVLKPQQEMKLKKLEERFYQMTGETWKLTAGHRLLEGDEDSEFENSSQASFETINGEAARRQNLPKFSTEISPAARPLLRKEVPDLPEEPSETAEEVVTVALRCPNGRVLRRRFFKSWNSQVLLDWMMKVGYHKSLYRLSTSFPRRALEVEGGSSLEDIGITVDTVLNVEEKEQSSQ</sequence>
<protein>
    <recommendedName>
        <fullName>UBX domain-containing protein 8</fullName>
    </recommendedName>
    <alternativeName>
        <fullName>Reproduction 8 protein</fullName>
        <shortName>Rep-8 protein</shortName>
    </alternativeName>
    <alternativeName>
        <fullName>UBX domain-containing protein 6</fullName>
    </alternativeName>
</protein>
<dbReference type="EMBL" id="D88447">
    <property type="protein sequence ID" value="BAA84495.1"/>
    <property type="molecule type" value="mRNA"/>
</dbReference>
<dbReference type="EMBL" id="BC024492">
    <property type="protein sequence ID" value="AAH24492.1"/>
    <property type="molecule type" value="mRNA"/>
</dbReference>
<dbReference type="CCDS" id="CCDS22234.1"/>
<dbReference type="PDB" id="2CR5">
    <property type="method" value="NMR"/>
    <property type="chains" value="A=182-277"/>
</dbReference>
<dbReference type="PDBsum" id="2CR5"/>
<dbReference type="SMR" id="Q9QZ49"/>
<dbReference type="FunCoup" id="Q9QZ49">
    <property type="interactions" value="663"/>
</dbReference>
<dbReference type="STRING" id="10090.ENSMUSP00000092992"/>
<dbReference type="iPTMnet" id="Q9QZ49"/>
<dbReference type="PhosphoSitePlus" id="Q9QZ49"/>
<dbReference type="PaxDb" id="10090-ENSMUSP00000092992"/>
<dbReference type="ProteomicsDB" id="298380"/>
<dbReference type="Pumba" id="Q9QZ49"/>
<dbReference type="AGR" id="MGI:1337129"/>
<dbReference type="MGI" id="MGI:1337129">
    <property type="gene designation" value="Ubxn8"/>
</dbReference>
<dbReference type="eggNOG" id="KOG1363">
    <property type="taxonomic scope" value="Eukaryota"/>
</dbReference>
<dbReference type="InParanoid" id="Q9QZ49"/>
<dbReference type="PhylomeDB" id="Q9QZ49"/>
<dbReference type="ChiTaRS" id="Ubxn8">
    <property type="organism name" value="mouse"/>
</dbReference>
<dbReference type="EvolutionaryTrace" id="Q9QZ49"/>
<dbReference type="PRO" id="PR:Q9QZ49"/>
<dbReference type="Proteomes" id="UP000000589">
    <property type="component" value="Unplaced"/>
</dbReference>
<dbReference type="RNAct" id="Q9QZ49">
    <property type="molecule type" value="protein"/>
</dbReference>
<dbReference type="GO" id="GO:0005789">
    <property type="term" value="C:endoplasmic reticulum membrane"/>
    <property type="evidence" value="ECO:0000250"/>
    <property type="project" value="UniProtKB"/>
</dbReference>
<dbReference type="GO" id="GO:0036503">
    <property type="term" value="P:ERAD pathway"/>
    <property type="evidence" value="ECO:0000250"/>
    <property type="project" value="UniProtKB"/>
</dbReference>
<dbReference type="CDD" id="cd01774">
    <property type="entry name" value="UBX_UBXN8"/>
    <property type="match status" value="1"/>
</dbReference>
<dbReference type="Gene3D" id="3.10.20.90">
    <property type="entry name" value="Phosphatidylinositol 3-kinase Catalytic Subunit, Chain A, domain 1"/>
    <property type="match status" value="1"/>
</dbReference>
<dbReference type="InterPro" id="IPR029071">
    <property type="entry name" value="Ubiquitin-like_domsf"/>
</dbReference>
<dbReference type="InterPro" id="IPR001012">
    <property type="entry name" value="UBX_dom"/>
</dbReference>
<dbReference type="InterPro" id="IPR050730">
    <property type="entry name" value="UBX_domain-protein"/>
</dbReference>
<dbReference type="InterPro" id="IPR017247">
    <property type="entry name" value="UBXN8"/>
</dbReference>
<dbReference type="PANTHER" id="PTHR23322">
    <property type="entry name" value="FAS-ASSOCIATED PROTEIN"/>
    <property type="match status" value="1"/>
</dbReference>
<dbReference type="PANTHER" id="PTHR23322:SF93">
    <property type="entry name" value="UBX DOMAIN-CONTAINING PROTEIN 8"/>
    <property type="match status" value="1"/>
</dbReference>
<dbReference type="Pfam" id="PF00789">
    <property type="entry name" value="UBX"/>
    <property type="match status" value="1"/>
</dbReference>
<dbReference type="PIRSF" id="PIRSF037632">
    <property type="entry name" value="UBX_Rep6"/>
    <property type="match status" value="1"/>
</dbReference>
<dbReference type="SUPFAM" id="SSF54236">
    <property type="entry name" value="Ubiquitin-like"/>
    <property type="match status" value="1"/>
</dbReference>
<dbReference type="PROSITE" id="PS50033">
    <property type="entry name" value="UBX"/>
    <property type="match status" value="1"/>
</dbReference>